<comment type="function">
    <text evidence="1">RuBisCO catalyzes two reactions: the carboxylation of D-ribulose 1,5-bisphosphate, the primary event in carbon dioxide fixation, as well as the oxidative fragmentation of the pentose substrate. Both reactions occur simultaneously and in competition at the same active site.</text>
</comment>
<comment type="catalytic activity">
    <reaction evidence="1">
        <text>2 (2R)-3-phosphoglycerate + 2 H(+) = D-ribulose 1,5-bisphosphate + CO2 + H2O</text>
        <dbReference type="Rhea" id="RHEA:23124"/>
        <dbReference type="ChEBI" id="CHEBI:15377"/>
        <dbReference type="ChEBI" id="CHEBI:15378"/>
        <dbReference type="ChEBI" id="CHEBI:16526"/>
        <dbReference type="ChEBI" id="CHEBI:57870"/>
        <dbReference type="ChEBI" id="CHEBI:58272"/>
        <dbReference type="EC" id="4.1.1.39"/>
    </reaction>
</comment>
<comment type="catalytic activity">
    <reaction evidence="1">
        <text>D-ribulose 1,5-bisphosphate + O2 = 2-phosphoglycolate + (2R)-3-phosphoglycerate + 2 H(+)</text>
        <dbReference type="Rhea" id="RHEA:36631"/>
        <dbReference type="ChEBI" id="CHEBI:15378"/>
        <dbReference type="ChEBI" id="CHEBI:15379"/>
        <dbReference type="ChEBI" id="CHEBI:57870"/>
        <dbReference type="ChEBI" id="CHEBI:58033"/>
        <dbReference type="ChEBI" id="CHEBI:58272"/>
    </reaction>
</comment>
<comment type="cofactor">
    <cofactor evidence="1">
        <name>Mg(2+)</name>
        <dbReference type="ChEBI" id="CHEBI:18420"/>
    </cofactor>
    <text evidence="1">Binds 1 Mg(2+) ion per subunit.</text>
</comment>
<comment type="subunit">
    <text evidence="1">Homodimer.</text>
</comment>
<comment type="miscellaneous">
    <text evidence="1">The basic functional RuBisCO is composed of a large chain homodimer in a 'head-to-tail' conformation. In contrast to form I RuBisCO, the form II RuBisCO are composed solely of large subunits.</text>
</comment>
<comment type="similarity">
    <text evidence="1">Belongs to the RuBisCO large chain family. Type II subfamily.</text>
</comment>
<protein>
    <recommendedName>
        <fullName evidence="1">Ribulose bisphosphate carboxylase</fullName>
        <shortName evidence="1">RuBisCO</shortName>
        <ecNumber evidence="1">4.1.1.39</ecNumber>
    </recommendedName>
</protein>
<organism>
    <name type="scientific">Rhodospirillum rubrum (strain ATCC 11170 / ATH 1.1.1 / DSM 467 / LMG 4362 / NCIMB 8255 / S1)</name>
    <dbReference type="NCBI Taxonomy" id="269796"/>
    <lineage>
        <taxon>Bacteria</taxon>
        <taxon>Pseudomonadati</taxon>
        <taxon>Pseudomonadota</taxon>
        <taxon>Alphaproteobacteria</taxon>
        <taxon>Rhodospirillales</taxon>
        <taxon>Rhodospirillaceae</taxon>
        <taxon>Rhodospirillum</taxon>
    </lineage>
</organism>
<feature type="chain" id="PRO_0000251412" description="Ribulose bisphosphate carboxylase">
    <location>
        <begin position="1"/>
        <end position="466"/>
    </location>
</feature>
<feature type="active site" description="Proton acceptor" evidence="1">
    <location>
        <position position="166"/>
    </location>
</feature>
<feature type="active site" description="Proton acceptor" evidence="1">
    <location>
        <position position="287"/>
    </location>
</feature>
<feature type="binding site" description="in homodimeric partner" evidence="1">
    <location>
        <position position="111"/>
    </location>
    <ligand>
        <name>substrate</name>
    </ligand>
</feature>
<feature type="binding site" evidence="1">
    <location>
        <position position="168"/>
    </location>
    <ligand>
        <name>substrate</name>
    </ligand>
</feature>
<feature type="binding site" description="via carbamate group" evidence="1">
    <location>
        <position position="191"/>
    </location>
    <ligand>
        <name>Mg(2+)</name>
        <dbReference type="ChEBI" id="CHEBI:18420"/>
    </ligand>
</feature>
<feature type="binding site" evidence="1">
    <location>
        <position position="193"/>
    </location>
    <ligand>
        <name>Mg(2+)</name>
        <dbReference type="ChEBI" id="CHEBI:18420"/>
    </ligand>
</feature>
<feature type="binding site" evidence="1">
    <location>
        <position position="194"/>
    </location>
    <ligand>
        <name>Mg(2+)</name>
        <dbReference type="ChEBI" id="CHEBI:18420"/>
    </ligand>
</feature>
<feature type="binding site" evidence="1">
    <location>
        <position position="288"/>
    </location>
    <ligand>
        <name>substrate</name>
    </ligand>
</feature>
<feature type="binding site" evidence="1">
    <location>
        <position position="321"/>
    </location>
    <ligand>
        <name>substrate</name>
    </ligand>
</feature>
<feature type="binding site" evidence="1">
    <location>
        <position position="368"/>
    </location>
    <ligand>
        <name>substrate</name>
    </ligand>
</feature>
<feature type="site" description="Transition state stabilizer" evidence="1">
    <location>
        <position position="329"/>
    </location>
</feature>
<feature type="modified residue" description="N6-carboxylysine" evidence="1">
    <location>
        <position position="191"/>
    </location>
</feature>
<accession>Q2RRP5</accession>
<sequence>MDQSSRYVNLALKEEDLIAGGEHVLCAYIMKPKAGYGYVATAAHFAAESSTGTNVEVCTTDDFTRGVDALVYEVDEARELTKIAYPVALFDRNITDGKAMIASFLTLTMGNNQGMGDVEYAKMHDFYVPEAYRALFDGPSVNISALWKVLGRPEVDGGLVVGTIIKPKLGLRPKPFAEACHAFWLGGDFIKNDEPQGNQPFAPLRDTIALVADAMRRAQDETGEAKLFSANITADDPFEIIARGEYVLETFGENASHVALLVDGYVAGAAAITTARRRFPDNFLHYHRAGHGAVTSPQSKRGYTAFVHCKMARLQGASGIHTGTMGFGKMEGESSDRAIAYMLTQDEAQGPFYRQSWGGMKACTPIISGGMNALRMPGFFENLGNANVILTAGGGAFGHIDGPVAGARSLRQAWQAWRDGVPVLDYAREHKELARAFESFPGDADQIYPGWRKALGVEDTRSALPA</sequence>
<dbReference type="EC" id="4.1.1.39" evidence="1"/>
<dbReference type="EMBL" id="CP000230">
    <property type="protein sequence ID" value="ABC23200.1"/>
    <property type="molecule type" value="Genomic_DNA"/>
</dbReference>
<dbReference type="RefSeq" id="WP_011390153.1">
    <property type="nucleotide sequence ID" value="NC_007643.1"/>
</dbReference>
<dbReference type="RefSeq" id="YP_427487.1">
    <property type="nucleotide sequence ID" value="NC_007643.1"/>
</dbReference>
<dbReference type="PDB" id="7VWX">
    <property type="method" value="EM"/>
    <property type="resolution" value="7.60 A"/>
    <property type="chains" value="a=1-466"/>
</dbReference>
<dbReference type="PDB" id="8BAA">
    <property type="method" value="EM"/>
    <property type="resolution" value="4.20 A"/>
    <property type="chains" value="Z=1-466"/>
</dbReference>
<dbReference type="PDBsum" id="7VWX"/>
<dbReference type="PDBsum" id="8BAA"/>
<dbReference type="EMDB" id="EMD-15944"/>
<dbReference type="EMDB" id="EMD-32164"/>
<dbReference type="SMR" id="Q2RRP5"/>
<dbReference type="STRING" id="269796.Rru_A2400"/>
<dbReference type="EnsemblBacteria" id="ABC23200">
    <property type="protein sequence ID" value="ABC23200"/>
    <property type="gene ID" value="Rru_A2400"/>
</dbReference>
<dbReference type="KEGG" id="rru:Rru_A2400"/>
<dbReference type="PATRIC" id="fig|269796.9.peg.2502"/>
<dbReference type="eggNOG" id="COG1850">
    <property type="taxonomic scope" value="Bacteria"/>
</dbReference>
<dbReference type="HOGENOM" id="CLU_031450_3_1_5"/>
<dbReference type="PhylomeDB" id="Q2RRP5"/>
<dbReference type="Proteomes" id="UP000001929">
    <property type="component" value="Chromosome"/>
</dbReference>
<dbReference type="GO" id="GO:0000287">
    <property type="term" value="F:magnesium ion binding"/>
    <property type="evidence" value="ECO:0007669"/>
    <property type="project" value="UniProtKB-UniRule"/>
</dbReference>
<dbReference type="GO" id="GO:0004497">
    <property type="term" value="F:monooxygenase activity"/>
    <property type="evidence" value="ECO:0007669"/>
    <property type="project" value="UniProtKB-KW"/>
</dbReference>
<dbReference type="GO" id="GO:0016984">
    <property type="term" value="F:ribulose-bisphosphate carboxylase activity"/>
    <property type="evidence" value="ECO:0007669"/>
    <property type="project" value="UniProtKB-UniRule"/>
</dbReference>
<dbReference type="GO" id="GO:0019253">
    <property type="term" value="P:reductive pentose-phosphate cycle"/>
    <property type="evidence" value="ECO:0007669"/>
    <property type="project" value="UniProtKB-KW"/>
</dbReference>
<dbReference type="CDD" id="cd08211">
    <property type="entry name" value="RuBisCO_large_II"/>
    <property type="match status" value="1"/>
</dbReference>
<dbReference type="Gene3D" id="3.20.20.110">
    <property type="entry name" value="Ribulose bisphosphate carboxylase, large subunit, C-terminal domain"/>
    <property type="match status" value="1"/>
</dbReference>
<dbReference type="Gene3D" id="3.30.70.150">
    <property type="entry name" value="RuBisCO large subunit, N-terminal domain"/>
    <property type="match status" value="1"/>
</dbReference>
<dbReference type="HAMAP" id="MF_01339">
    <property type="entry name" value="RuBisCO_L_type2"/>
    <property type="match status" value="1"/>
</dbReference>
<dbReference type="InterPro" id="IPR033966">
    <property type="entry name" value="RuBisCO"/>
</dbReference>
<dbReference type="InterPro" id="IPR020878">
    <property type="entry name" value="RuBisCo_large_chain_AS"/>
</dbReference>
<dbReference type="InterPro" id="IPR000685">
    <property type="entry name" value="RuBisCO_lsu_C"/>
</dbReference>
<dbReference type="InterPro" id="IPR036376">
    <property type="entry name" value="RuBisCO_lsu_C_sf"/>
</dbReference>
<dbReference type="InterPro" id="IPR017443">
    <property type="entry name" value="RuBisCO_lsu_fd_N"/>
</dbReference>
<dbReference type="InterPro" id="IPR036422">
    <property type="entry name" value="RuBisCO_lsu_N_sf"/>
</dbReference>
<dbReference type="InterPro" id="IPR020871">
    <property type="entry name" value="RuBisCO_lsuII"/>
</dbReference>
<dbReference type="NCBIfam" id="NF010002">
    <property type="entry name" value="PRK13475.1"/>
    <property type="match status" value="1"/>
</dbReference>
<dbReference type="PANTHER" id="PTHR42704">
    <property type="entry name" value="RIBULOSE BISPHOSPHATE CARBOXYLASE"/>
    <property type="match status" value="1"/>
</dbReference>
<dbReference type="PANTHER" id="PTHR42704:SF17">
    <property type="entry name" value="RIBULOSE BISPHOSPHATE CARBOXYLASE LARGE CHAIN"/>
    <property type="match status" value="1"/>
</dbReference>
<dbReference type="Pfam" id="PF00016">
    <property type="entry name" value="RuBisCO_large"/>
    <property type="match status" value="1"/>
</dbReference>
<dbReference type="Pfam" id="PF02788">
    <property type="entry name" value="RuBisCO_large_N"/>
    <property type="match status" value="1"/>
</dbReference>
<dbReference type="SFLD" id="SFLDG01052">
    <property type="entry name" value="RuBisCO"/>
    <property type="match status" value="1"/>
</dbReference>
<dbReference type="SFLD" id="SFLDS00014">
    <property type="entry name" value="RuBisCO"/>
    <property type="match status" value="1"/>
</dbReference>
<dbReference type="SFLD" id="SFLDG00301">
    <property type="entry name" value="RuBisCO-like_proteins"/>
    <property type="match status" value="1"/>
</dbReference>
<dbReference type="SUPFAM" id="SSF51649">
    <property type="entry name" value="RuBisCo, C-terminal domain"/>
    <property type="match status" value="1"/>
</dbReference>
<dbReference type="SUPFAM" id="SSF54966">
    <property type="entry name" value="RuBisCO, large subunit, small (N-terminal) domain"/>
    <property type="match status" value="1"/>
</dbReference>
<dbReference type="PROSITE" id="PS00157">
    <property type="entry name" value="RUBISCO_LARGE"/>
    <property type="match status" value="1"/>
</dbReference>
<proteinExistence type="evidence at protein level"/>
<gene>
    <name evidence="1" type="primary">cbbM</name>
    <name type="ordered locus">Rru_A2400</name>
</gene>
<name>RBL2_RHORT</name>
<keyword id="KW-0002">3D-structure</keyword>
<keyword id="KW-0113">Calvin cycle</keyword>
<keyword id="KW-0120">Carbon dioxide fixation</keyword>
<keyword id="KW-0456">Lyase</keyword>
<keyword id="KW-0460">Magnesium</keyword>
<keyword id="KW-0479">Metal-binding</keyword>
<keyword id="KW-0503">Monooxygenase</keyword>
<keyword id="KW-0560">Oxidoreductase</keyword>
<keyword id="KW-0602">Photosynthesis</keyword>
<keyword id="KW-1185">Reference proteome</keyword>
<reference key="1">
    <citation type="journal article" date="2011" name="Stand. Genomic Sci.">
        <title>Complete genome sequence of Rhodospirillum rubrum type strain (S1).</title>
        <authorList>
            <person name="Munk A.C."/>
            <person name="Copeland A."/>
            <person name="Lucas S."/>
            <person name="Lapidus A."/>
            <person name="Del Rio T.G."/>
            <person name="Barry K."/>
            <person name="Detter J.C."/>
            <person name="Hammon N."/>
            <person name="Israni S."/>
            <person name="Pitluck S."/>
            <person name="Brettin T."/>
            <person name="Bruce D."/>
            <person name="Han C."/>
            <person name="Tapia R."/>
            <person name="Gilna P."/>
            <person name="Schmutz J."/>
            <person name="Larimer F."/>
            <person name="Land M."/>
            <person name="Kyrpides N.C."/>
            <person name="Mavromatis K."/>
            <person name="Richardson P."/>
            <person name="Rohde M."/>
            <person name="Goeker M."/>
            <person name="Klenk H.P."/>
            <person name="Zhang Y."/>
            <person name="Roberts G.P."/>
            <person name="Reslewic S."/>
            <person name="Schwartz D.C."/>
        </authorList>
    </citation>
    <scope>NUCLEOTIDE SEQUENCE [LARGE SCALE GENOMIC DNA]</scope>
    <source>
        <strain>ATCC 11170 / ATH 1.1.1 / DSM 467 / LMG 4362 / NCIMB 8255 / S1</strain>
    </source>
</reference>
<evidence type="ECO:0000255" key="1">
    <source>
        <dbReference type="HAMAP-Rule" id="MF_01339"/>
    </source>
</evidence>